<feature type="signal peptide" evidence="2">
    <location>
        <begin position="1"/>
        <end position="18"/>
    </location>
</feature>
<feature type="chain" id="PRO_0000019034" description="Otoraplin">
    <location>
        <begin position="19"/>
        <end position="128"/>
    </location>
</feature>
<feature type="domain" description="SH3" evidence="3">
    <location>
        <begin position="39"/>
        <end position="110"/>
    </location>
</feature>
<feature type="disulfide bond" evidence="1">
    <location>
        <begin position="32"/>
        <end position="37"/>
    </location>
</feature>
<feature type="disulfide bond" evidence="1">
    <location>
        <begin position="55"/>
        <end position="127"/>
    </location>
</feature>
<accession>Q9JIE3</accession>
<sequence>MARILILLLGGLVVLCAGHGVFMDKLSSKKLCADEECVYTISLARAQEDYNAPDCRFIDVKKGQQIYVYSKLVTENGAGEFWAGSVYGDHQDEMGIVGYFPSNLVKEQRVYQEATKEIPTTDIDFFCE</sequence>
<name>OTOR_MOUSE</name>
<dbReference type="EMBL" id="AF233333">
    <property type="protein sequence ID" value="AAF82079.1"/>
    <property type="molecule type" value="mRNA"/>
</dbReference>
<dbReference type="EMBL" id="AJ243939">
    <property type="protein sequence ID" value="CAC27444.1"/>
    <property type="molecule type" value="mRNA"/>
</dbReference>
<dbReference type="CCDS" id="CCDS16809.1"/>
<dbReference type="RefSeq" id="NP_065620.1">
    <property type="nucleotide sequence ID" value="NM_020595.3"/>
</dbReference>
<dbReference type="SMR" id="Q9JIE3"/>
<dbReference type="FunCoup" id="Q9JIE3">
    <property type="interactions" value="78"/>
</dbReference>
<dbReference type="STRING" id="10090.ENSMUSP00000028902"/>
<dbReference type="PhosphoSitePlus" id="Q9JIE3"/>
<dbReference type="PaxDb" id="10090-ENSMUSP00000028902"/>
<dbReference type="Antibodypedia" id="9190">
    <property type="antibodies" value="66 antibodies from 21 providers"/>
</dbReference>
<dbReference type="DNASU" id="57329"/>
<dbReference type="Ensembl" id="ENSMUST00000028902.3">
    <property type="protein sequence ID" value="ENSMUSP00000028902.3"/>
    <property type="gene ID" value="ENSMUSG00000027416.3"/>
</dbReference>
<dbReference type="GeneID" id="57329"/>
<dbReference type="KEGG" id="mmu:57329"/>
<dbReference type="UCSC" id="uc008mqc.1">
    <property type="organism name" value="mouse"/>
</dbReference>
<dbReference type="AGR" id="MGI:1888678"/>
<dbReference type="CTD" id="56914"/>
<dbReference type="MGI" id="MGI:1888678">
    <property type="gene designation" value="Otor"/>
</dbReference>
<dbReference type="VEuPathDB" id="HostDB:ENSMUSG00000027416"/>
<dbReference type="eggNOG" id="ENOG502S18Q">
    <property type="taxonomic scope" value="Eukaryota"/>
</dbReference>
<dbReference type="GeneTree" id="ENSGT00950000182767"/>
<dbReference type="HOGENOM" id="CLU_158739_0_1_1"/>
<dbReference type="InParanoid" id="Q9JIE3"/>
<dbReference type="OMA" id="LCADDDC"/>
<dbReference type="OrthoDB" id="6627676at2759"/>
<dbReference type="PhylomeDB" id="Q9JIE3"/>
<dbReference type="TreeFam" id="TF332724"/>
<dbReference type="BioGRID-ORCS" id="57329">
    <property type="hits" value="0 hits in 77 CRISPR screens"/>
</dbReference>
<dbReference type="ChiTaRS" id="Otor">
    <property type="organism name" value="mouse"/>
</dbReference>
<dbReference type="PRO" id="PR:Q9JIE3"/>
<dbReference type="Proteomes" id="UP000000589">
    <property type="component" value="Chromosome 2"/>
</dbReference>
<dbReference type="RNAct" id="Q9JIE3">
    <property type="molecule type" value="protein"/>
</dbReference>
<dbReference type="Bgee" id="ENSMUSG00000027416">
    <property type="expression patterns" value="Expressed in vestibular epithelium and 53 other cell types or tissues"/>
</dbReference>
<dbReference type="ExpressionAtlas" id="Q9JIE3">
    <property type="expression patterns" value="baseline and differential"/>
</dbReference>
<dbReference type="GO" id="GO:0005576">
    <property type="term" value="C:extracellular region"/>
    <property type="evidence" value="ECO:0000247"/>
    <property type="project" value="MGI"/>
</dbReference>
<dbReference type="GO" id="GO:0005794">
    <property type="term" value="C:Golgi apparatus"/>
    <property type="evidence" value="ECO:0000250"/>
    <property type="project" value="MGI"/>
</dbReference>
<dbReference type="GO" id="GO:0001502">
    <property type="term" value="P:cartilage condensation"/>
    <property type="evidence" value="ECO:0000315"/>
    <property type="project" value="MGI"/>
</dbReference>
<dbReference type="CDD" id="cd11891">
    <property type="entry name" value="MIAL"/>
    <property type="match status" value="1"/>
</dbReference>
<dbReference type="FunFam" id="2.30.30.40:FF:000175">
    <property type="entry name" value="Melanoma-derived growth regulatory protein"/>
    <property type="match status" value="1"/>
</dbReference>
<dbReference type="Gene3D" id="2.30.30.40">
    <property type="entry name" value="SH3 Domains"/>
    <property type="match status" value="1"/>
</dbReference>
<dbReference type="InterPro" id="IPR042801">
    <property type="entry name" value="OTOR"/>
</dbReference>
<dbReference type="InterPro" id="IPR035554">
    <property type="entry name" value="Otoraplin_SH3"/>
</dbReference>
<dbReference type="InterPro" id="IPR036028">
    <property type="entry name" value="SH3-like_dom_sf"/>
</dbReference>
<dbReference type="InterPro" id="IPR001452">
    <property type="entry name" value="SH3_domain"/>
</dbReference>
<dbReference type="PANTHER" id="PTHR47146">
    <property type="entry name" value="OTORAPLIN"/>
    <property type="match status" value="1"/>
</dbReference>
<dbReference type="PANTHER" id="PTHR47146:SF1">
    <property type="entry name" value="OTORAPLIN"/>
    <property type="match status" value="1"/>
</dbReference>
<dbReference type="Pfam" id="PF07653">
    <property type="entry name" value="SH3_2"/>
    <property type="match status" value="1"/>
</dbReference>
<dbReference type="SMART" id="SM00326">
    <property type="entry name" value="SH3"/>
    <property type="match status" value="1"/>
</dbReference>
<dbReference type="SUPFAM" id="SSF50044">
    <property type="entry name" value="SH3-domain"/>
    <property type="match status" value="1"/>
</dbReference>
<dbReference type="PROSITE" id="PS50002">
    <property type="entry name" value="SH3"/>
    <property type="match status" value="1"/>
</dbReference>
<organism>
    <name type="scientific">Mus musculus</name>
    <name type="common">Mouse</name>
    <dbReference type="NCBI Taxonomy" id="10090"/>
    <lineage>
        <taxon>Eukaryota</taxon>
        <taxon>Metazoa</taxon>
        <taxon>Chordata</taxon>
        <taxon>Craniata</taxon>
        <taxon>Vertebrata</taxon>
        <taxon>Euteleostomi</taxon>
        <taxon>Mammalia</taxon>
        <taxon>Eutheria</taxon>
        <taxon>Euarchontoglires</taxon>
        <taxon>Glires</taxon>
        <taxon>Rodentia</taxon>
        <taxon>Myomorpha</taxon>
        <taxon>Muroidea</taxon>
        <taxon>Muridae</taxon>
        <taxon>Murinae</taxon>
        <taxon>Mus</taxon>
        <taxon>Mus</taxon>
    </lineage>
</organism>
<protein>
    <recommendedName>
        <fullName>Otoraplin</fullName>
    </recommendedName>
    <alternativeName>
        <fullName>Melanoma inhibitory activity-like protein</fullName>
    </alternativeName>
</protein>
<gene>
    <name type="primary">Otor</name>
    <name type="synonym">Mial</name>
</gene>
<reference key="1">
    <citation type="journal article" date="2000" name="Genomics">
        <title>A novel conserved cochlear gene, OTOR: identification, expression analysis, and chromosomal mapping.</title>
        <authorList>
            <person name="Robertson N.G."/>
            <person name="Heller S."/>
            <person name="Lin J.S."/>
            <person name="Resendes B.L."/>
            <person name="Weremowicz S."/>
            <person name="Denis C.S."/>
            <person name="Bell A.M."/>
            <person name="Hudspeth A.J."/>
            <person name="Morton C.C."/>
        </authorList>
    </citation>
    <scope>NUCLEOTIDE SEQUENCE [MRNA]</scope>
</reference>
<reference key="2">
    <citation type="journal article" date="2001" name="Genomics">
        <title>Identification and characterization of an inner ear-expressed human melanoma inhibitory activity (MIA)-like gene (MIAL) with a frequent polymorphism that abolishes translation.</title>
        <authorList>
            <person name="Rendtorff N.D."/>
            <person name="Frodin M."/>
            <person name="Attie-Bitach T."/>
            <person name="Vekemans M."/>
            <person name="Tommerup N."/>
        </authorList>
    </citation>
    <scope>NUCLEOTIDE SEQUENCE [MRNA]</scope>
    <source>
        <tissue>Fetus</tissue>
    </source>
</reference>
<proteinExistence type="evidence at transcript level"/>
<keyword id="KW-1015">Disulfide bond</keyword>
<keyword id="KW-1185">Reference proteome</keyword>
<keyword id="KW-0964">Secreted</keyword>
<keyword id="KW-0728">SH3 domain</keyword>
<keyword id="KW-0732">Signal</keyword>
<comment type="subcellular location">
    <subcellularLocation>
        <location evidence="4">Secreted</location>
    </subcellularLocation>
</comment>
<comment type="tissue specificity">
    <text>Highly expressed in cochlea.</text>
</comment>
<comment type="similarity">
    <text evidence="4">Belongs to the MIA/OTOR family.</text>
</comment>
<evidence type="ECO:0000250" key="1"/>
<evidence type="ECO:0000255" key="2"/>
<evidence type="ECO:0000255" key="3">
    <source>
        <dbReference type="PROSITE-ProRule" id="PRU00192"/>
    </source>
</evidence>
<evidence type="ECO:0000305" key="4"/>